<keyword id="KW-0687">Ribonucleoprotein</keyword>
<keyword id="KW-0689">Ribosomal protein</keyword>
<sequence length="122" mass="12530">MSTITKDQILEGVAALSVMEIVELISAMEEKFGVSAAAVAAGPAAAVEAAEEQTEFDVVLASFGENKVAVIKAVRGATGLGLKEAKDLVESAPAVLKEGVNKDEAETLKKSLEEAGASVEIK</sequence>
<reference key="1">
    <citation type="submission" date="2008-02" db="EMBL/GenBank/DDBJ databases">
        <title>Complete sequence of Yersinia pseudotuberculosis YPIII.</title>
        <authorList>
            <consortium name="US DOE Joint Genome Institute"/>
            <person name="Copeland A."/>
            <person name="Lucas S."/>
            <person name="Lapidus A."/>
            <person name="Glavina del Rio T."/>
            <person name="Dalin E."/>
            <person name="Tice H."/>
            <person name="Bruce D."/>
            <person name="Goodwin L."/>
            <person name="Pitluck S."/>
            <person name="Munk A.C."/>
            <person name="Brettin T."/>
            <person name="Detter J.C."/>
            <person name="Han C."/>
            <person name="Tapia R."/>
            <person name="Schmutz J."/>
            <person name="Larimer F."/>
            <person name="Land M."/>
            <person name="Hauser L."/>
            <person name="Challacombe J.F."/>
            <person name="Green L."/>
            <person name="Lindler L.E."/>
            <person name="Nikolich M.P."/>
            <person name="Richardson P."/>
        </authorList>
    </citation>
    <scope>NUCLEOTIDE SEQUENCE [LARGE SCALE GENOMIC DNA]</scope>
    <source>
        <strain>YPIII</strain>
    </source>
</reference>
<accession>B1JJJ7</accession>
<evidence type="ECO:0000255" key="1">
    <source>
        <dbReference type="HAMAP-Rule" id="MF_00368"/>
    </source>
</evidence>
<evidence type="ECO:0000305" key="2"/>
<dbReference type="EMBL" id="CP000950">
    <property type="protein sequence ID" value="ACA66648.1"/>
    <property type="molecule type" value="Genomic_DNA"/>
</dbReference>
<dbReference type="RefSeq" id="WP_002210675.1">
    <property type="nucleotide sequence ID" value="NZ_CP009792.1"/>
</dbReference>
<dbReference type="SMR" id="B1JJJ7"/>
<dbReference type="GeneID" id="96663775"/>
<dbReference type="KEGG" id="ypy:YPK_0338"/>
<dbReference type="PATRIC" id="fig|502800.11.peg.941"/>
<dbReference type="GO" id="GO:0022625">
    <property type="term" value="C:cytosolic large ribosomal subunit"/>
    <property type="evidence" value="ECO:0007669"/>
    <property type="project" value="TreeGrafter"/>
</dbReference>
<dbReference type="GO" id="GO:0003729">
    <property type="term" value="F:mRNA binding"/>
    <property type="evidence" value="ECO:0007669"/>
    <property type="project" value="TreeGrafter"/>
</dbReference>
<dbReference type="GO" id="GO:0003735">
    <property type="term" value="F:structural constituent of ribosome"/>
    <property type="evidence" value="ECO:0007669"/>
    <property type="project" value="InterPro"/>
</dbReference>
<dbReference type="GO" id="GO:0006412">
    <property type="term" value="P:translation"/>
    <property type="evidence" value="ECO:0007669"/>
    <property type="project" value="UniProtKB-UniRule"/>
</dbReference>
<dbReference type="CDD" id="cd00387">
    <property type="entry name" value="Ribosomal_L7_L12"/>
    <property type="match status" value="1"/>
</dbReference>
<dbReference type="FunFam" id="3.30.1390.10:FF:000001">
    <property type="entry name" value="50S ribosomal protein L7/L12"/>
    <property type="match status" value="1"/>
</dbReference>
<dbReference type="Gene3D" id="3.30.1390.10">
    <property type="match status" value="1"/>
</dbReference>
<dbReference type="Gene3D" id="1.20.5.710">
    <property type="entry name" value="Single helix bin"/>
    <property type="match status" value="1"/>
</dbReference>
<dbReference type="HAMAP" id="MF_00368">
    <property type="entry name" value="Ribosomal_bL12"/>
    <property type="match status" value="1"/>
</dbReference>
<dbReference type="InterPro" id="IPR000206">
    <property type="entry name" value="Ribosomal_bL12"/>
</dbReference>
<dbReference type="InterPro" id="IPR013823">
    <property type="entry name" value="Ribosomal_bL12_C"/>
</dbReference>
<dbReference type="InterPro" id="IPR014719">
    <property type="entry name" value="Ribosomal_bL12_C/ClpS-like"/>
</dbReference>
<dbReference type="InterPro" id="IPR008932">
    <property type="entry name" value="Ribosomal_bL12_oligo"/>
</dbReference>
<dbReference type="InterPro" id="IPR036235">
    <property type="entry name" value="Ribosomal_bL12_oligo_N_sf"/>
</dbReference>
<dbReference type="NCBIfam" id="TIGR00855">
    <property type="entry name" value="L12"/>
    <property type="match status" value="1"/>
</dbReference>
<dbReference type="PANTHER" id="PTHR45987">
    <property type="entry name" value="39S RIBOSOMAL PROTEIN L12"/>
    <property type="match status" value="1"/>
</dbReference>
<dbReference type="PANTHER" id="PTHR45987:SF4">
    <property type="entry name" value="LARGE RIBOSOMAL SUBUNIT PROTEIN BL12M"/>
    <property type="match status" value="1"/>
</dbReference>
<dbReference type="Pfam" id="PF00542">
    <property type="entry name" value="Ribosomal_L12"/>
    <property type="match status" value="1"/>
</dbReference>
<dbReference type="Pfam" id="PF16320">
    <property type="entry name" value="Ribosomal_L12_N"/>
    <property type="match status" value="1"/>
</dbReference>
<dbReference type="SUPFAM" id="SSF54736">
    <property type="entry name" value="ClpS-like"/>
    <property type="match status" value="1"/>
</dbReference>
<dbReference type="SUPFAM" id="SSF48300">
    <property type="entry name" value="Ribosomal protein L7/12, oligomerisation (N-terminal) domain"/>
    <property type="match status" value="1"/>
</dbReference>
<feature type="chain" id="PRO_1000121513" description="Large ribosomal subunit protein bL12">
    <location>
        <begin position="1"/>
        <end position="122"/>
    </location>
</feature>
<gene>
    <name evidence="1" type="primary">rplL</name>
    <name type="ordered locus">YPK_0338</name>
</gene>
<proteinExistence type="inferred from homology"/>
<name>RL7_YERPY</name>
<comment type="function">
    <text evidence="1">Forms part of the ribosomal stalk which helps the ribosome interact with GTP-bound translation factors. Is thus essential for accurate translation.</text>
</comment>
<comment type="subunit">
    <text evidence="1">Homodimer. Part of the ribosomal stalk of the 50S ribosomal subunit. Forms a multimeric L10(L12)X complex, where L10 forms an elongated spine to which 2 to 4 L12 dimers bind in a sequential fashion. Binds GTP-bound translation factors.</text>
</comment>
<comment type="similarity">
    <text evidence="1">Belongs to the bacterial ribosomal protein bL12 family.</text>
</comment>
<organism>
    <name type="scientific">Yersinia pseudotuberculosis serotype O:3 (strain YPIII)</name>
    <dbReference type="NCBI Taxonomy" id="502800"/>
    <lineage>
        <taxon>Bacteria</taxon>
        <taxon>Pseudomonadati</taxon>
        <taxon>Pseudomonadota</taxon>
        <taxon>Gammaproteobacteria</taxon>
        <taxon>Enterobacterales</taxon>
        <taxon>Yersiniaceae</taxon>
        <taxon>Yersinia</taxon>
    </lineage>
</organism>
<protein>
    <recommendedName>
        <fullName evidence="1">Large ribosomal subunit protein bL12</fullName>
    </recommendedName>
    <alternativeName>
        <fullName evidence="2">50S ribosomal protein L7/L12</fullName>
    </alternativeName>
</protein>